<accession>B3CL80</accession>
<feature type="chain" id="PRO_1000127803" description="dTTP/UTP pyrophosphatase">
    <location>
        <begin position="1"/>
        <end position="196"/>
    </location>
</feature>
<feature type="active site" description="Proton acceptor" evidence="1">
    <location>
        <position position="75"/>
    </location>
</feature>
<feature type="site" description="Important for substrate specificity" evidence="1">
    <location>
        <position position="17"/>
    </location>
</feature>
<feature type="site" description="Important for substrate specificity" evidence="1">
    <location>
        <position position="76"/>
    </location>
</feature>
<feature type="site" description="Important for substrate specificity" evidence="1">
    <location>
        <position position="160"/>
    </location>
</feature>
<keyword id="KW-0963">Cytoplasm</keyword>
<keyword id="KW-0378">Hydrolase</keyword>
<keyword id="KW-0546">Nucleotide metabolism</keyword>
<comment type="function">
    <text evidence="1">Nucleoside triphosphate pyrophosphatase that hydrolyzes dTTP and UTP. May have a dual role in cell division arrest and in preventing the incorporation of modified nucleotides into cellular nucleic acids.</text>
</comment>
<comment type="catalytic activity">
    <reaction evidence="1">
        <text>dTTP + H2O = dTMP + diphosphate + H(+)</text>
        <dbReference type="Rhea" id="RHEA:28534"/>
        <dbReference type="ChEBI" id="CHEBI:15377"/>
        <dbReference type="ChEBI" id="CHEBI:15378"/>
        <dbReference type="ChEBI" id="CHEBI:33019"/>
        <dbReference type="ChEBI" id="CHEBI:37568"/>
        <dbReference type="ChEBI" id="CHEBI:63528"/>
        <dbReference type="EC" id="3.6.1.9"/>
    </reaction>
</comment>
<comment type="catalytic activity">
    <reaction evidence="1">
        <text>UTP + H2O = UMP + diphosphate + H(+)</text>
        <dbReference type="Rhea" id="RHEA:29395"/>
        <dbReference type="ChEBI" id="CHEBI:15377"/>
        <dbReference type="ChEBI" id="CHEBI:15378"/>
        <dbReference type="ChEBI" id="CHEBI:33019"/>
        <dbReference type="ChEBI" id="CHEBI:46398"/>
        <dbReference type="ChEBI" id="CHEBI:57865"/>
        <dbReference type="EC" id="3.6.1.9"/>
    </reaction>
</comment>
<comment type="cofactor">
    <cofactor evidence="1">
        <name>a divalent metal cation</name>
        <dbReference type="ChEBI" id="CHEBI:60240"/>
    </cofactor>
</comment>
<comment type="subcellular location">
    <subcellularLocation>
        <location evidence="1">Cytoplasm</location>
    </subcellularLocation>
</comment>
<comment type="similarity">
    <text evidence="1">Belongs to the Maf family. YhdE subfamily.</text>
</comment>
<dbReference type="EC" id="3.6.1.9" evidence="1"/>
<dbReference type="EMBL" id="AM999887">
    <property type="protein sequence ID" value="CAQ54145.1"/>
    <property type="molecule type" value="Genomic_DNA"/>
</dbReference>
<dbReference type="RefSeq" id="WP_007302819.1">
    <property type="nucleotide sequence ID" value="NC_010981.1"/>
</dbReference>
<dbReference type="SMR" id="B3CL80"/>
<dbReference type="KEGG" id="wpi:WP0036"/>
<dbReference type="eggNOG" id="COG0424">
    <property type="taxonomic scope" value="Bacteria"/>
</dbReference>
<dbReference type="HOGENOM" id="CLU_040416_2_0_5"/>
<dbReference type="Proteomes" id="UP000008814">
    <property type="component" value="Chromosome"/>
</dbReference>
<dbReference type="GO" id="GO:0005737">
    <property type="term" value="C:cytoplasm"/>
    <property type="evidence" value="ECO:0007669"/>
    <property type="project" value="UniProtKB-SubCell"/>
</dbReference>
<dbReference type="GO" id="GO:0036218">
    <property type="term" value="F:dTTP diphosphatase activity"/>
    <property type="evidence" value="ECO:0007669"/>
    <property type="project" value="RHEA"/>
</dbReference>
<dbReference type="GO" id="GO:0036221">
    <property type="term" value="F:UTP diphosphatase activity"/>
    <property type="evidence" value="ECO:0007669"/>
    <property type="project" value="RHEA"/>
</dbReference>
<dbReference type="GO" id="GO:0009117">
    <property type="term" value="P:nucleotide metabolic process"/>
    <property type="evidence" value="ECO:0007669"/>
    <property type="project" value="UniProtKB-KW"/>
</dbReference>
<dbReference type="CDD" id="cd00555">
    <property type="entry name" value="Maf"/>
    <property type="match status" value="1"/>
</dbReference>
<dbReference type="Gene3D" id="3.90.950.10">
    <property type="match status" value="1"/>
</dbReference>
<dbReference type="HAMAP" id="MF_00528">
    <property type="entry name" value="Maf"/>
    <property type="match status" value="1"/>
</dbReference>
<dbReference type="InterPro" id="IPR029001">
    <property type="entry name" value="ITPase-like_fam"/>
</dbReference>
<dbReference type="InterPro" id="IPR003697">
    <property type="entry name" value="Maf-like"/>
</dbReference>
<dbReference type="NCBIfam" id="TIGR00172">
    <property type="entry name" value="maf"/>
    <property type="match status" value="1"/>
</dbReference>
<dbReference type="NCBIfam" id="NF010946">
    <property type="entry name" value="PRK14366.1"/>
    <property type="match status" value="1"/>
</dbReference>
<dbReference type="PANTHER" id="PTHR43213">
    <property type="entry name" value="BIFUNCTIONAL DTTP/UTP PYROPHOSPHATASE/METHYLTRANSFERASE PROTEIN-RELATED"/>
    <property type="match status" value="1"/>
</dbReference>
<dbReference type="PANTHER" id="PTHR43213:SF5">
    <property type="entry name" value="BIFUNCTIONAL DTTP_UTP PYROPHOSPHATASE_METHYLTRANSFERASE PROTEIN-RELATED"/>
    <property type="match status" value="1"/>
</dbReference>
<dbReference type="Pfam" id="PF02545">
    <property type="entry name" value="Maf"/>
    <property type="match status" value="1"/>
</dbReference>
<dbReference type="PIRSF" id="PIRSF006305">
    <property type="entry name" value="Maf"/>
    <property type="match status" value="1"/>
</dbReference>
<dbReference type="SUPFAM" id="SSF52972">
    <property type="entry name" value="ITPase-like"/>
    <property type="match status" value="1"/>
</dbReference>
<protein>
    <recommendedName>
        <fullName evidence="1">dTTP/UTP pyrophosphatase</fullName>
        <shortName evidence="1">dTTPase/UTPase</shortName>
        <ecNumber evidence="1">3.6.1.9</ecNumber>
    </recommendedName>
    <alternativeName>
        <fullName evidence="1">Nucleoside triphosphate pyrophosphatase</fullName>
    </alternativeName>
    <alternativeName>
        <fullName evidence="1">Nucleotide pyrophosphatase</fullName>
        <shortName evidence="1">Nucleotide PPase</shortName>
    </alternativeName>
</protein>
<organism>
    <name type="scientific">Wolbachia pipientis subsp. Culex pipiens (strain wPip)</name>
    <dbReference type="NCBI Taxonomy" id="570417"/>
    <lineage>
        <taxon>Bacteria</taxon>
        <taxon>Pseudomonadati</taxon>
        <taxon>Pseudomonadota</taxon>
        <taxon>Alphaproteobacteria</taxon>
        <taxon>Rickettsiales</taxon>
        <taxon>Anaplasmataceae</taxon>
        <taxon>Wolbachieae</taxon>
        <taxon>Wolbachia</taxon>
    </lineage>
</organism>
<proteinExistence type="inferred from homology"/>
<name>NTPPA_WOLPP</name>
<reference key="1">
    <citation type="journal article" date="2008" name="Mol. Biol. Evol.">
        <title>Genome evolution of Wolbachia strain wPip from the Culex pipiens group.</title>
        <authorList>
            <person name="Klasson L."/>
            <person name="Walker T."/>
            <person name="Sebaihia M."/>
            <person name="Sanders M.J."/>
            <person name="Quail M.A."/>
            <person name="Lord A."/>
            <person name="Sanders S."/>
            <person name="Earl J."/>
            <person name="O'Neill S.L."/>
            <person name="Thomson N."/>
            <person name="Sinkins S.P."/>
            <person name="Parkhill J."/>
        </authorList>
    </citation>
    <scope>NUCLEOTIDE SEQUENCE [LARGE SCALE GENOMIC DNA]</scope>
    <source>
        <strain>wPip</strain>
    </source>
</reference>
<gene>
    <name type="ordered locus">WP0036</name>
</gene>
<evidence type="ECO:0000255" key="1">
    <source>
        <dbReference type="HAMAP-Rule" id="MF_00528"/>
    </source>
</evidence>
<sequence length="196" mass="22157">MIEQSLDNLILASSSERRVALLKQINIKPGLVLPADIDESPLKKELPKDYSIRMAKSKAEKIQSANPNYFVLGVDTVVACGRRILLKAENVEQAEKCVRLLSGRRHRVYTSVCLLIPDQSKQHIRTVVTIVKFKRLSEQEIKYYLASEEWKNRAGGCNIQGLAGMFVLFLRGSYSSVIGLPLHETNCLLSNYFNLY</sequence>